<evidence type="ECO:0000255" key="1"/>
<evidence type="ECO:0000305" key="2"/>
<reference key="1">
    <citation type="journal article" date="2002" name="Nature">
        <title>The genome sequence of Schizosaccharomyces pombe.</title>
        <authorList>
            <person name="Wood V."/>
            <person name="Gwilliam R."/>
            <person name="Rajandream M.A."/>
            <person name="Lyne M.H."/>
            <person name="Lyne R."/>
            <person name="Stewart A."/>
            <person name="Sgouros J.G."/>
            <person name="Peat N."/>
            <person name="Hayles J."/>
            <person name="Baker S.G."/>
            <person name="Basham D."/>
            <person name="Bowman S."/>
            <person name="Brooks K."/>
            <person name="Brown D."/>
            <person name="Brown S."/>
            <person name="Chillingworth T."/>
            <person name="Churcher C.M."/>
            <person name="Collins M."/>
            <person name="Connor R."/>
            <person name="Cronin A."/>
            <person name="Davis P."/>
            <person name="Feltwell T."/>
            <person name="Fraser A."/>
            <person name="Gentles S."/>
            <person name="Goble A."/>
            <person name="Hamlin N."/>
            <person name="Harris D.E."/>
            <person name="Hidalgo J."/>
            <person name="Hodgson G."/>
            <person name="Holroyd S."/>
            <person name="Hornsby T."/>
            <person name="Howarth S."/>
            <person name="Huckle E.J."/>
            <person name="Hunt S."/>
            <person name="Jagels K."/>
            <person name="James K.D."/>
            <person name="Jones L."/>
            <person name="Jones M."/>
            <person name="Leather S."/>
            <person name="McDonald S."/>
            <person name="McLean J."/>
            <person name="Mooney P."/>
            <person name="Moule S."/>
            <person name="Mungall K.L."/>
            <person name="Murphy L.D."/>
            <person name="Niblett D."/>
            <person name="Odell C."/>
            <person name="Oliver K."/>
            <person name="O'Neil S."/>
            <person name="Pearson D."/>
            <person name="Quail M.A."/>
            <person name="Rabbinowitsch E."/>
            <person name="Rutherford K.M."/>
            <person name="Rutter S."/>
            <person name="Saunders D."/>
            <person name="Seeger K."/>
            <person name="Sharp S."/>
            <person name="Skelton J."/>
            <person name="Simmonds M.N."/>
            <person name="Squares R."/>
            <person name="Squares S."/>
            <person name="Stevens K."/>
            <person name="Taylor K."/>
            <person name="Taylor R.G."/>
            <person name="Tivey A."/>
            <person name="Walsh S.V."/>
            <person name="Warren T."/>
            <person name="Whitehead S."/>
            <person name="Woodward J.R."/>
            <person name="Volckaert G."/>
            <person name="Aert R."/>
            <person name="Robben J."/>
            <person name="Grymonprez B."/>
            <person name="Weltjens I."/>
            <person name="Vanstreels E."/>
            <person name="Rieger M."/>
            <person name="Schaefer M."/>
            <person name="Mueller-Auer S."/>
            <person name="Gabel C."/>
            <person name="Fuchs M."/>
            <person name="Duesterhoeft A."/>
            <person name="Fritzc C."/>
            <person name="Holzer E."/>
            <person name="Moestl D."/>
            <person name="Hilbert H."/>
            <person name="Borzym K."/>
            <person name="Langer I."/>
            <person name="Beck A."/>
            <person name="Lehrach H."/>
            <person name="Reinhardt R."/>
            <person name="Pohl T.M."/>
            <person name="Eger P."/>
            <person name="Zimmermann W."/>
            <person name="Wedler H."/>
            <person name="Wambutt R."/>
            <person name="Purnelle B."/>
            <person name="Goffeau A."/>
            <person name="Cadieu E."/>
            <person name="Dreano S."/>
            <person name="Gloux S."/>
            <person name="Lelaure V."/>
            <person name="Mottier S."/>
            <person name="Galibert F."/>
            <person name="Aves S.J."/>
            <person name="Xiang Z."/>
            <person name="Hunt C."/>
            <person name="Moore K."/>
            <person name="Hurst S.M."/>
            <person name="Lucas M."/>
            <person name="Rochet M."/>
            <person name="Gaillardin C."/>
            <person name="Tallada V.A."/>
            <person name="Garzon A."/>
            <person name="Thode G."/>
            <person name="Daga R.R."/>
            <person name="Cruzado L."/>
            <person name="Jimenez J."/>
            <person name="Sanchez M."/>
            <person name="del Rey F."/>
            <person name="Benito J."/>
            <person name="Dominguez A."/>
            <person name="Revuelta J.L."/>
            <person name="Moreno S."/>
            <person name="Armstrong J."/>
            <person name="Forsburg S.L."/>
            <person name="Cerutti L."/>
            <person name="Lowe T."/>
            <person name="McCombie W.R."/>
            <person name="Paulsen I."/>
            <person name="Potashkin J."/>
            <person name="Shpakovski G.V."/>
            <person name="Ussery D."/>
            <person name="Barrell B.G."/>
            <person name="Nurse P."/>
        </authorList>
    </citation>
    <scope>NUCLEOTIDE SEQUENCE [LARGE SCALE GENOMIC DNA]</scope>
    <source>
        <strain>972 / ATCC 24843</strain>
    </source>
</reference>
<proteinExistence type="predicted"/>
<comment type="subcellular location">
    <subcellularLocation>
        <location evidence="2">Membrane</location>
        <topology evidence="2">Single-pass membrane protein</topology>
    </subcellularLocation>
</comment>
<protein>
    <recommendedName>
        <fullName>Uncharacterized protein C1002.20</fullName>
    </recommendedName>
</protein>
<gene>
    <name type="ORF">SPAC1002.20</name>
</gene>
<dbReference type="EMBL" id="CU329670">
    <property type="protein sequence ID" value="CAC34481.1"/>
    <property type="molecule type" value="Genomic_DNA"/>
</dbReference>
<dbReference type="RefSeq" id="NP_593501.1">
    <property type="nucleotide sequence ID" value="NM_001018935.2"/>
</dbReference>
<dbReference type="PaxDb" id="4896-SPAC1002.20.1"/>
<dbReference type="EnsemblFungi" id="SPAC1002.20.1">
    <property type="protein sequence ID" value="SPAC1002.20.1:pep"/>
    <property type="gene ID" value="SPAC1002.20"/>
</dbReference>
<dbReference type="KEGG" id="spo:2543258"/>
<dbReference type="PomBase" id="SPAC1002.20"/>
<dbReference type="VEuPathDB" id="FungiDB:SPAC1002.20"/>
<dbReference type="HOGENOM" id="CLU_2293310_0_0_1"/>
<dbReference type="InParanoid" id="Q9C121"/>
<dbReference type="PRO" id="PR:Q9C121"/>
<dbReference type="Proteomes" id="UP000002485">
    <property type="component" value="Chromosome I"/>
</dbReference>
<dbReference type="GO" id="GO:0016020">
    <property type="term" value="C:membrane"/>
    <property type="evidence" value="ECO:0007669"/>
    <property type="project" value="UniProtKB-SubCell"/>
</dbReference>
<sequence>MTFQRSLRDGFHRLINFYFYPSYHDTVVHNLAFSTSDYIYFKHLTDRNDDALLKVDQTINKTNRFIFRKLKILCPSFLNYSFINIYCFGPYTMVGEEFLFF</sequence>
<feature type="chain" id="PRO_0000304020" description="Uncharacterized protein C1002.20">
    <location>
        <begin position="1"/>
        <end position="101"/>
    </location>
</feature>
<feature type="transmembrane region" description="Helical" evidence="1">
    <location>
        <begin position="72"/>
        <end position="94"/>
    </location>
</feature>
<accession>Q9C121</accession>
<keyword id="KW-0472">Membrane</keyword>
<keyword id="KW-1185">Reference proteome</keyword>
<keyword id="KW-0812">Transmembrane</keyword>
<keyword id="KW-1133">Transmembrane helix</keyword>
<name>YIZK_SCHPO</name>
<organism>
    <name type="scientific">Schizosaccharomyces pombe (strain 972 / ATCC 24843)</name>
    <name type="common">Fission yeast</name>
    <dbReference type="NCBI Taxonomy" id="284812"/>
    <lineage>
        <taxon>Eukaryota</taxon>
        <taxon>Fungi</taxon>
        <taxon>Dikarya</taxon>
        <taxon>Ascomycota</taxon>
        <taxon>Taphrinomycotina</taxon>
        <taxon>Schizosaccharomycetes</taxon>
        <taxon>Schizosaccharomycetales</taxon>
        <taxon>Schizosaccharomycetaceae</taxon>
        <taxon>Schizosaccharomyces</taxon>
    </lineage>
</organism>